<proteinExistence type="evidence at transcript level"/>
<accession>Q5E9R1</accession>
<accession>Q3T066</accession>
<organism>
    <name type="scientific">Bos taurus</name>
    <name type="common">Bovine</name>
    <dbReference type="NCBI Taxonomy" id="9913"/>
    <lineage>
        <taxon>Eukaryota</taxon>
        <taxon>Metazoa</taxon>
        <taxon>Chordata</taxon>
        <taxon>Craniata</taxon>
        <taxon>Vertebrata</taxon>
        <taxon>Euteleostomi</taxon>
        <taxon>Mammalia</taxon>
        <taxon>Eutheria</taxon>
        <taxon>Laurasiatheria</taxon>
        <taxon>Artiodactyla</taxon>
        <taxon>Ruminantia</taxon>
        <taxon>Pecora</taxon>
        <taxon>Bovidae</taxon>
        <taxon>Bovinae</taxon>
        <taxon>Bos</taxon>
    </lineage>
</organism>
<feature type="chain" id="PRO_0000399791" description="Solute carrier family 52, riboflavin transporter, member 3">
    <location>
        <begin position="1"/>
        <end position="467"/>
    </location>
</feature>
<feature type="topological domain" description="Cytoplasmic" evidence="5">
    <location>
        <begin position="1"/>
        <end position="2"/>
    </location>
</feature>
<feature type="transmembrane region" description="Helical" evidence="3">
    <location>
        <begin position="3"/>
        <end position="23"/>
    </location>
</feature>
<feature type="topological domain" description="Extracellular" evidence="5">
    <location>
        <begin position="24"/>
        <end position="43"/>
    </location>
</feature>
<feature type="transmembrane region" description="Helical" evidence="3">
    <location>
        <begin position="44"/>
        <end position="64"/>
    </location>
</feature>
<feature type="topological domain" description="Cytoplasmic" evidence="5">
    <location>
        <begin position="65"/>
        <end position="71"/>
    </location>
</feature>
<feature type="transmembrane region" description="Helical" evidence="3">
    <location>
        <begin position="72"/>
        <end position="92"/>
    </location>
</feature>
<feature type="topological domain" description="Extracellular" evidence="5">
    <location>
        <begin position="93"/>
        <end position="105"/>
    </location>
</feature>
<feature type="transmembrane region" description="Helical" evidence="3">
    <location>
        <begin position="106"/>
        <end position="126"/>
    </location>
</feature>
<feature type="topological domain" description="Cytoplasmic" evidence="5">
    <location>
        <begin position="127"/>
        <end position="137"/>
    </location>
</feature>
<feature type="transmembrane region" description="Helical" evidence="3">
    <location>
        <begin position="138"/>
        <end position="158"/>
    </location>
</feature>
<feature type="topological domain" description="Extracellular" evidence="5">
    <location>
        <begin position="159"/>
        <end position="220"/>
    </location>
</feature>
<feature type="transmembrane region" description="Helical" evidence="3">
    <location>
        <begin position="221"/>
        <end position="241"/>
    </location>
</feature>
<feature type="topological domain" description="Cytoplasmic" evidence="5">
    <location>
        <begin position="242"/>
        <end position="294"/>
    </location>
</feature>
<feature type="transmembrane region" description="Helical" evidence="3">
    <location>
        <begin position="295"/>
        <end position="315"/>
    </location>
</feature>
<feature type="topological domain" description="Extracellular" evidence="5">
    <location>
        <begin position="316"/>
        <end position="333"/>
    </location>
</feature>
<feature type="transmembrane region" description="Helical" evidence="3">
    <location>
        <begin position="334"/>
        <end position="354"/>
    </location>
</feature>
<feature type="topological domain" description="Cytoplasmic" evidence="5">
    <location>
        <begin position="355"/>
        <end position="359"/>
    </location>
</feature>
<feature type="transmembrane region" description="Helical" evidence="3">
    <location>
        <begin position="360"/>
        <end position="380"/>
    </location>
</feature>
<feature type="topological domain" description="Extracellular" evidence="5">
    <location>
        <begin position="381"/>
        <end position="394"/>
    </location>
</feature>
<feature type="transmembrane region" description="Helical" evidence="3">
    <location>
        <begin position="395"/>
        <end position="415"/>
    </location>
</feature>
<feature type="topological domain" description="Cytoplasmic" evidence="5">
    <location>
        <begin position="416"/>
        <end position="425"/>
    </location>
</feature>
<feature type="transmembrane region" description="Helical" evidence="3">
    <location>
        <begin position="426"/>
        <end position="446"/>
    </location>
</feature>
<feature type="topological domain" description="Extracellular" evidence="5">
    <location>
        <begin position="447"/>
        <end position="467"/>
    </location>
</feature>
<feature type="region of interest" description="Disordered" evidence="4">
    <location>
        <begin position="266"/>
        <end position="288"/>
    </location>
</feature>
<feature type="compositionally biased region" description="Basic and acidic residues" evidence="4">
    <location>
        <begin position="268"/>
        <end position="288"/>
    </location>
</feature>
<feature type="modified residue" description="Phosphoserine" evidence="1">
    <location>
        <position position="251"/>
    </location>
</feature>
<feature type="glycosylation site" description="N-linked (GlcNAc...) asparagine" evidence="3">
    <location>
        <position position="94"/>
    </location>
</feature>
<feature type="glycosylation site" description="N-linked (GlcNAc...) asparagine" evidence="3">
    <location>
        <position position="168"/>
    </location>
</feature>
<feature type="sequence conflict" description="In Ref. 2; AAI02547." evidence="5" ref="2">
    <original>I</original>
    <variation>K</variation>
    <location>
        <position position="252"/>
    </location>
</feature>
<feature type="sequence conflict" description="In Ref. 2; AAI02547." evidence="5" ref="2">
    <original>G</original>
    <variation>W</variation>
    <location>
        <position position="328"/>
    </location>
</feature>
<feature type="sequence conflict" description="In Ref. 2; AAI02547." evidence="5" ref="2">
    <original>L</original>
    <variation>F</variation>
    <location>
        <position position="396"/>
    </location>
</feature>
<reference key="1">
    <citation type="journal article" date="2005" name="BMC Genomics">
        <title>Characterization of 954 bovine full-CDS cDNA sequences.</title>
        <authorList>
            <person name="Harhay G.P."/>
            <person name="Sonstegard T.S."/>
            <person name="Keele J.W."/>
            <person name="Heaton M.P."/>
            <person name="Clawson M.L."/>
            <person name="Snelling W.M."/>
            <person name="Wiedmann R.T."/>
            <person name="Van Tassell C.P."/>
            <person name="Smith T.P.L."/>
        </authorList>
    </citation>
    <scope>NUCLEOTIDE SEQUENCE [LARGE SCALE MRNA]</scope>
</reference>
<reference key="2">
    <citation type="submission" date="2005-08" db="EMBL/GenBank/DDBJ databases">
        <authorList>
            <consortium name="NIH - Mammalian Gene Collection (MGC) project"/>
        </authorList>
    </citation>
    <scope>NUCLEOTIDE SEQUENCE [LARGE SCALE MRNA]</scope>
    <source>
        <strain>Crossbred X Angus</strain>
        <tissue>Liver</tissue>
    </source>
</reference>
<comment type="function">
    <text evidence="2">Plasma membrane transporter mediating the uptake by cells of the water soluble vitamin B2/riboflavin that plays a key role in biochemical oxidation-reduction reactions of the carbohydrate, lipid, and amino acid metabolism.</text>
</comment>
<comment type="catalytic activity">
    <reaction evidence="2">
        <text>riboflavin(in) = riboflavin(out)</text>
        <dbReference type="Rhea" id="RHEA:35015"/>
        <dbReference type="ChEBI" id="CHEBI:57986"/>
    </reaction>
</comment>
<comment type="subcellular location">
    <subcellularLocation>
        <location evidence="2">Cell membrane</location>
        <topology evidence="3">Multi-pass membrane protein</topology>
    </subcellularLocation>
</comment>
<comment type="similarity">
    <text evidence="5">Belongs to the riboflavin transporter family.</text>
</comment>
<sequence length="467" mass="50530">MAFLIHLLVCTFGMGSWVAINGLWVELPLLVTELPEGWYLPSYLTVIIQLANVGPLLVTLLHHFRPGCLSEVAVVFTVLGVGTIACTLFAFLWNVTSWVLGSRHSIAFLVLTFFLALVDCTSSVTFLPFMSRLPTYYLTTFFVGEGLSGLLPALVALAQGSGLTTCVNVTEISATTLSPETTRNMDSPQGASSTLVSKLAGTAPSGIHLESRYLPANFSPLVFFLLLSFMMACCFISFFFLQRQPKRWEASIEDLLTSQVTLNSIRPQEGKDLGPPEESGKAQDPPEEKTAPQHLAHLTFIYVLVAFVNALTNGVLPSVQTYSCLSYGPVAYHLSATLSSMASPLTCFLSIFLPNRSLPFLGVLAVLGTSFGAYNMAMAVMSPCPFMQGHWGGEVLIVVSWVLFTGCLSYVKVMLGVILRDHSRSALLWCGAAVQLGSLLGAVVMFPLVNVLRLFSSADFCSLQCSA</sequence>
<evidence type="ECO:0000250" key="1">
    <source>
        <dbReference type="UniProtKB" id="Q4FZU9"/>
    </source>
</evidence>
<evidence type="ECO:0000250" key="2">
    <source>
        <dbReference type="UniProtKB" id="Q9NQ40"/>
    </source>
</evidence>
<evidence type="ECO:0000255" key="3"/>
<evidence type="ECO:0000256" key="4">
    <source>
        <dbReference type="SAM" id="MobiDB-lite"/>
    </source>
</evidence>
<evidence type="ECO:0000305" key="5"/>
<keyword id="KW-1003">Cell membrane</keyword>
<keyword id="KW-0325">Glycoprotein</keyword>
<keyword id="KW-0472">Membrane</keyword>
<keyword id="KW-0597">Phosphoprotein</keyword>
<keyword id="KW-1185">Reference proteome</keyword>
<keyword id="KW-0812">Transmembrane</keyword>
<keyword id="KW-1133">Transmembrane helix</keyword>
<keyword id="KW-0813">Transport</keyword>
<dbReference type="EMBL" id="BT020859">
    <property type="protein sequence ID" value="AAX08876.1"/>
    <property type="molecule type" value="mRNA"/>
</dbReference>
<dbReference type="EMBL" id="BC102546">
    <property type="protein sequence ID" value="AAI02547.1"/>
    <property type="molecule type" value="mRNA"/>
</dbReference>
<dbReference type="RefSeq" id="NP_001014864.1">
    <property type="nucleotide sequence ID" value="NM_001014864.1"/>
</dbReference>
<dbReference type="RefSeq" id="XP_010809721.1">
    <property type="nucleotide sequence ID" value="XM_010811419.2"/>
</dbReference>
<dbReference type="RefSeq" id="XP_010809722.1">
    <property type="nucleotide sequence ID" value="XM_010811420.2"/>
</dbReference>
<dbReference type="RefSeq" id="XP_010809723.1">
    <property type="nucleotide sequence ID" value="XM_010811421.2"/>
</dbReference>
<dbReference type="RefSeq" id="XP_015329621.1">
    <property type="nucleotide sequence ID" value="XM_015474135.1"/>
</dbReference>
<dbReference type="SMR" id="Q5E9R1"/>
<dbReference type="FunCoup" id="Q5E9R1">
    <property type="interactions" value="319"/>
</dbReference>
<dbReference type="STRING" id="9913.ENSBTAP00000070838"/>
<dbReference type="GlyCosmos" id="Q5E9R1">
    <property type="glycosylation" value="2 sites, No reported glycans"/>
</dbReference>
<dbReference type="GlyGen" id="Q5E9R1">
    <property type="glycosylation" value="2 sites"/>
</dbReference>
<dbReference type="PaxDb" id="9913-ENSBTAP00000005194"/>
<dbReference type="Ensembl" id="ENSBTAT00000005194.4">
    <property type="protein sequence ID" value="ENSBTAP00000005194.2"/>
    <property type="gene ID" value="ENSBTAG00000003977.4"/>
</dbReference>
<dbReference type="GeneID" id="507459"/>
<dbReference type="KEGG" id="bta:507459"/>
<dbReference type="CTD" id="113278"/>
<dbReference type="VEuPathDB" id="HostDB:ENSBTAG00000003977"/>
<dbReference type="VGNC" id="VGNC:34902">
    <property type="gene designation" value="SLC52A3"/>
</dbReference>
<dbReference type="eggNOG" id="KOG4255">
    <property type="taxonomic scope" value="Eukaryota"/>
</dbReference>
<dbReference type="GeneTree" id="ENSGT00390000003774"/>
<dbReference type="HOGENOM" id="CLU_034789_1_0_1"/>
<dbReference type="InParanoid" id="Q5E9R1"/>
<dbReference type="OMA" id="CGAAAQM"/>
<dbReference type="OrthoDB" id="9995836at2759"/>
<dbReference type="TreeFam" id="TF314820"/>
<dbReference type="Reactome" id="R-BTA-196843">
    <property type="pathway name" value="Vitamin B2 (riboflavin) metabolism"/>
</dbReference>
<dbReference type="Proteomes" id="UP000009136">
    <property type="component" value="Chromosome 13"/>
</dbReference>
<dbReference type="Bgee" id="ENSBTAG00000003977">
    <property type="expression patterns" value="Expressed in spermatocyte and 38 other cell types or tissues"/>
</dbReference>
<dbReference type="GO" id="GO:0005886">
    <property type="term" value="C:plasma membrane"/>
    <property type="evidence" value="ECO:0000250"/>
    <property type="project" value="UniProtKB"/>
</dbReference>
<dbReference type="GO" id="GO:0032217">
    <property type="term" value="F:riboflavin transmembrane transporter activity"/>
    <property type="evidence" value="ECO:0000250"/>
    <property type="project" value="UniProtKB"/>
</dbReference>
<dbReference type="GO" id="GO:0034605">
    <property type="term" value="P:cellular response to heat"/>
    <property type="evidence" value="ECO:0007669"/>
    <property type="project" value="Ensembl"/>
</dbReference>
<dbReference type="GO" id="GO:0072388">
    <property type="term" value="P:flavin adenine dinucleotide biosynthetic process"/>
    <property type="evidence" value="ECO:0007669"/>
    <property type="project" value="Ensembl"/>
</dbReference>
<dbReference type="GO" id="GO:0006771">
    <property type="term" value="P:riboflavin metabolic process"/>
    <property type="evidence" value="ECO:0007669"/>
    <property type="project" value="Ensembl"/>
</dbReference>
<dbReference type="GO" id="GO:0032218">
    <property type="term" value="P:riboflavin transport"/>
    <property type="evidence" value="ECO:0000250"/>
    <property type="project" value="UniProtKB"/>
</dbReference>
<dbReference type="GO" id="GO:0007605">
    <property type="term" value="P:sensory perception of sound"/>
    <property type="evidence" value="ECO:0000250"/>
    <property type="project" value="UniProtKB"/>
</dbReference>
<dbReference type="InterPro" id="IPR009357">
    <property type="entry name" value="Riboflavin_transptr"/>
</dbReference>
<dbReference type="PANTHER" id="PTHR12929">
    <property type="entry name" value="SOLUTE CARRIER FAMILY 52"/>
    <property type="match status" value="1"/>
</dbReference>
<dbReference type="PANTHER" id="PTHR12929:SF4">
    <property type="entry name" value="SOLUTE CARRIER FAMILY 52, RIBOFLAVIN TRANSPORTER, MEMBER 3"/>
    <property type="match status" value="1"/>
</dbReference>
<dbReference type="Pfam" id="PF06237">
    <property type="entry name" value="SLC52_ribofla_tr"/>
    <property type="match status" value="1"/>
</dbReference>
<gene>
    <name type="primary">SLC52A3</name>
    <name type="synonym">RFT2</name>
</gene>
<protein>
    <recommendedName>
        <fullName>Solute carrier family 52, riboflavin transporter, member 3</fullName>
    </recommendedName>
    <alternativeName>
        <fullName>Riboflavin transporter 2</fullName>
        <shortName>RFT2</shortName>
    </alternativeName>
</protein>
<name>S52A3_BOVIN</name>